<sequence>MVLSAADKTNVKGIFAKIAGHAEEYGAEALDRMFTTYPQTKTYFPHFDVSHGSAQIKGHGKKVAAALVEAANHIDDIAGTLSKLSDLHAQKLRVDPVNFKLLGQCFLVVVAIHHPAALTPEVHASLDKFLCAVGTVLTAKYR</sequence>
<keyword id="KW-0002">3D-structure</keyword>
<keyword id="KW-0349">Heme</keyword>
<keyword id="KW-0408">Iron</keyword>
<keyword id="KW-0479">Metal-binding</keyword>
<keyword id="KW-0561">Oxygen transport</keyword>
<keyword id="KW-1185">Reference proteome</keyword>
<keyword id="KW-0813">Transport</keyword>
<organism>
    <name type="scientific">Coturnix japonica</name>
    <name type="common">Japanese quail</name>
    <name type="synonym">Coturnix coturnix japonica</name>
    <dbReference type="NCBI Taxonomy" id="93934"/>
    <lineage>
        <taxon>Eukaryota</taxon>
        <taxon>Metazoa</taxon>
        <taxon>Chordata</taxon>
        <taxon>Craniata</taxon>
        <taxon>Vertebrata</taxon>
        <taxon>Euteleostomi</taxon>
        <taxon>Archelosauria</taxon>
        <taxon>Archosauria</taxon>
        <taxon>Dinosauria</taxon>
        <taxon>Saurischia</taxon>
        <taxon>Theropoda</taxon>
        <taxon>Coelurosauria</taxon>
        <taxon>Aves</taxon>
        <taxon>Neognathae</taxon>
        <taxon>Galloanserae</taxon>
        <taxon>Galliformes</taxon>
        <taxon>Phasianidae</taxon>
        <taxon>Perdicinae</taxon>
        <taxon>Coturnix</taxon>
    </lineage>
</organism>
<name>HBA_COTJA</name>
<comment type="function">
    <text>Involved in oxygen transport from the lung to the various peripheral tissues.</text>
</comment>
<comment type="subunit">
    <text>Heterotetramer of two alpha chains and two beta chains.</text>
</comment>
<comment type="tissue specificity">
    <text>Red blood cells.</text>
</comment>
<comment type="miscellaneous">
    <text>This alpha-A chain is from the major component, which has been called the Q-II component.</text>
</comment>
<comment type="similarity">
    <text evidence="1">Belongs to the globin family.</text>
</comment>
<evidence type="ECO:0000255" key="1">
    <source>
        <dbReference type="PROSITE-ProRule" id="PRU00238"/>
    </source>
</evidence>
<evidence type="ECO:0007829" key="2">
    <source>
        <dbReference type="PDB" id="3MJP"/>
    </source>
</evidence>
<feature type="initiator methionine" description="Removed">
    <location>
        <position position="1"/>
    </location>
</feature>
<feature type="chain" id="PRO_0000052607" description="Hemoglobin subunit alpha-A">
    <location>
        <begin position="2"/>
        <end position="142"/>
    </location>
</feature>
<feature type="domain" description="Globin" evidence="1">
    <location>
        <begin position="2"/>
        <end position="142"/>
    </location>
</feature>
<feature type="binding site" evidence="1">
    <location>
        <position position="59"/>
    </location>
    <ligand>
        <name>O2</name>
        <dbReference type="ChEBI" id="CHEBI:15379"/>
    </ligand>
</feature>
<feature type="binding site" description="proximal binding residue" evidence="1">
    <location>
        <position position="88"/>
    </location>
    <ligand>
        <name>heme b</name>
        <dbReference type="ChEBI" id="CHEBI:60344"/>
    </ligand>
    <ligandPart>
        <name>Fe</name>
        <dbReference type="ChEBI" id="CHEBI:18248"/>
    </ligandPart>
</feature>
<feature type="helix" evidence="2">
    <location>
        <begin position="5"/>
        <end position="18"/>
    </location>
</feature>
<feature type="helix" evidence="2">
    <location>
        <begin position="19"/>
        <end position="21"/>
    </location>
</feature>
<feature type="helix" evidence="2">
    <location>
        <begin position="22"/>
        <end position="33"/>
    </location>
</feature>
<feature type="helix" evidence="2">
    <location>
        <begin position="40"/>
        <end position="43"/>
    </location>
</feature>
<feature type="strand" evidence="2">
    <location>
        <begin position="45"/>
        <end position="47"/>
    </location>
</feature>
<feature type="helix" evidence="2">
    <location>
        <begin position="54"/>
        <end position="65"/>
    </location>
</feature>
<feature type="turn" evidence="2">
    <location>
        <begin position="66"/>
        <end position="70"/>
    </location>
</feature>
<feature type="helix" evidence="2">
    <location>
        <begin position="71"/>
        <end position="76"/>
    </location>
</feature>
<feature type="helix" evidence="2">
    <location>
        <begin position="77"/>
        <end position="80"/>
    </location>
</feature>
<feature type="helix" evidence="2">
    <location>
        <begin position="84"/>
        <end position="87"/>
    </location>
</feature>
<feature type="turn" evidence="2">
    <location>
        <begin position="88"/>
        <end position="91"/>
    </location>
</feature>
<feature type="helix" evidence="2">
    <location>
        <begin position="97"/>
        <end position="103"/>
    </location>
</feature>
<feature type="helix" evidence="2">
    <location>
        <begin position="107"/>
        <end position="113"/>
    </location>
</feature>
<feature type="turn" evidence="2">
    <location>
        <begin position="115"/>
        <end position="117"/>
    </location>
</feature>
<feature type="helix" evidence="2">
    <location>
        <begin position="120"/>
        <end position="129"/>
    </location>
</feature>
<feature type="helix" evidence="2">
    <location>
        <begin position="132"/>
        <end position="137"/>
    </location>
</feature>
<feature type="turn" evidence="2">
    <location>
        <begin position="138"/>
        <end position="141"/>
    </location>
</feature>
<proteinExistence type="evidence at protein level"/>
<gene>
    <name type="primary">HBAA</name>
</gene>
<reference key="1">
    <citation type="journal article" date="1991" name="Biol. Chem. Hoppe-Seyler">
        <title>Protein structure and cDNA nucleotide sequence of the Japanese quail alpha A globin.</title>
        <authorList>
            <person name="Eguchi Y."/>
            <person name="Takei H."/>
            <person name="Oshiro M."/>
            <person name="Toda T."/>
            <person name="Nakashima Y."/>
        </authorList>
    </citation>
    <scope>NUCLEOTIDE SEQUENCE [MRNA]</scope>
</reference>
<dbReference type="EMBL" id="X57680">
    <property type="protein sequence ID" value="CAA40868.1"/>
    <property type="molecule type" value="mRNA"/>
</dbReference>
<dbReference type="PIR" id="S13452">
    <property type="entry name" value="S13452"/>
</dbReference>
<dbReference type="PDB" id="3MJP">
    <property type="method" value="X-ray"/>
    <property type="resolution" value="2.76 A"/>
    <property type="chains" value="A/C=2-142"/>
</dbReference>
<dbReference type="PDBsum" id="3MJP"/>
<dbReference type="SMR" id="P24589"/>
<dbReference type="EvolutionaryTrace" id="P24589"/>
<dbReference type="Proteomes" id="UP000694412">
    <property type="component" value="Unplaced"/>
</dbReference>
<dbReference type="GO" id="GO:0072562">
    <property type="term" value="C:blood microparticle"/>
    <property type="evidence" value="ECO:0007669"/>
    <property type="project" value="TreeGrafter"/>
</dbReference>
<dbReference type="GO" id="GO:0031838">
    <property type="term" value="C:haptoglobin-hemoglobin complex"/>
    <property type="evidence" value="ECO:0007669"/>
    <property type="project" value="TreeGrafter"/>
</dbReference>
<dbReference type="GO" id="GO:0005833">
    <property type="term" value="C:hemoglobin complex"/>
    <property type="evidence" value="ECO:0007669"/>
    <property type="project" value="InterPro"/>
</dbReference>
<dbReference type="GO" id="GO:0031720">
    <property type="term" value="F:haptoglobin binding"/>
    <property type="evidence" value="ECO:0007669"/>
    <property type="project" value="TreeGrafter"/>
</dbReference>
<dbReference type="GO" id="GO:0020037">
    <property type="term" value="F:heme binding"/>
    <property type="evidence" value="ECO:0007669"/>
    <property type="project" value="InterPro"/>
</dbReference>
<dbReference type="GO" id="GO:0005506">
    <property type="term" value="F:iron ion binding"/>
    <property type="evidence" value="ECO:0007669"/>
    <property type="project" value="InterPro"/>
</dbReference>
<dbReference type="GO" id="GO:0043177">
    <property type="term" value="F:organic acid binding"/>
    <property type="evidence" value="ECO:0007669"/>
    <property type="project" value="TreeGrafter"/>
</dbReference>
<dbReference type="GO" id="GO:0019825">
    <property type="term" value="F:oxygen binding"/>
    <property type="evidence" value="ECO:0007669"/>
    <property type="project" value="InterPro"/>
</dbReference>
<dbReference type="GO" id="GO:0005344">
    <property type="term" value="F:oxygen carrier activity"/>
    <property type="evidence" value="ECO:0007669"/>
    <property type="project" value="UniProtKB-KW"/>
</dbReference>
<dbReference type="GO" id="GO:0004601">
    <property type="term" value="F:peroxidase activity"/>
    <property type="evidence" value="ECO:0007669"/>
    <property type="project" value="TreeGrafter"/>
</dbReference>
<dbReference type="GO" id="GO:0042744">
    <property type="term" value="P:hydrogen peroxide catabolic process"/>
    <property type="evidence" value="ECO:0007669"/>
    <property type="project" value="TreeGrafter"/>
</dbReference>
<dbReference type="CDD" id="cd08927">
    <property type="entry name" value="Hb-alpha-like"/>
    <property type="match status" value="1"/>
</dbReference>
<dbReference type="FunFam" id="1.10.490.10:FF:000002">
    <property type="entry name" value="Hemoglobin subunit alpha"/>
    <property type="match status" value="1"/>
</dbReference>
<dbReference type="Gene3D" id="1.10.490.10">
    <property type="entry name" value="Globins"/>
    <property type="match status" value="1"/>
</dbReference>
<dbReference type="InterPro" id="IPR000971">
    <property type="entry name" value="Globin"/>
</dbReference>
<dbReference type="InterPro" id="IPR009050">
    <property type="entry name" value="Globin-like_sf"/>
</dbReference>
<dbReference type="InterPro" id="IPR012292">
    <property type="entry name" value="Globin/Proto"/>
</dbReference>
<dbReference type="InterPro" id="IPR002338">
    <property type="entry name" value="Hemoglobin_a-typ"/>
</dbReference>
<dbReference type="InterPro" id="IPR050056">
    <property type="entry name" value="Hemoglobin_oxygen_transport"/>
</dbReference>
<dbReference type="InterPro" id="IPR002339">
    <property type="entry name" value="Hemoglobin_pi"/>
</dbReference>
<dbReference type="PANTHER" id="PTHR11442">
    <property type="entry name" value="HEMOGLOBIN FAMILY MEMBER"/>
    <property type="match status" value="1"/>
</dbReference>
<dbReference type="PANTHER" id="PTHR11442:SF48">
    <property type="entry name" value="HEMOGLOBIN SUBUNIT ALPHA"/>
    <property type="match status" value="1"/>
</dbReference>
<dbReference type="Pfam" id="PF00042">
    <property type="entry name" value="Globin"/>
    <property type="match status" value="1"/>
</dbReference>
<dbReference type="PRINTS" id="PR00612">
    <property type="entry name" value="ALPHAHAEM"/>
</dbReference>
<dbReference type="PRINTS" id="PR00815">
    <property type="entry name" value="PIHAEM"/>
</dbReference>
<dbReference type="SUPFAM" id="SSF46458">
    <property type="entry name" value="Globin-like"/>
    <property type="match status" value="1"/>
</dbReference>
<dbReference type="PROSITE" id="PS01033">
    <property type="entry name" value="GLOBIN"/>
    <property type="match status" value="1"/>
</dbReference>
<protein>
    <recommendedName>
        <fullName>Hemoglobin subunit alpha-A</fullName>
    </recommendedName>
    <alternativeName>
        <fullName>Alpha-A-globin</fullName>
    </alternativeName>
    <alternativeName>
        <fullName>Hemoglobin alpha-A chain</fullName>
    </alternativeName>
</protein>
<accession>P24589</accession>